<comment type="function">
    <text evidence="1">Interacts with the SecY protein in vivo. May bind preferentially to an uncomplexed state of SecY, thus functioning either as a chelating agent for excess SecY in the cell or as a regulatory factor that negatively controls the translocase function.</text>
</comment>
<comment type="subcellular location">
    <subcellularLocation>
        <location evidence="1">Cell inner membrane</location>
        <topology evidence="1">Peripheral membrane protein</topology>
        <orientation evidence="1">Cytoplasmic side</orientation>
    </subcellularLocation>
    <text evidence="1">Loosely associated with the cytoplasmic side of the inner membrane, probably via SecY.</text>
</comment>
<comment type="similarity">
    <text evidence="1">Belongs to the Syd family.</text>
</comment>
<feature type="chain" id="PRO_1000137031" description="Protein Syd">
    <location>
        <begin position="1"/>
        <end position="181"/>
    </location>
</feature>
<keyword id="KW-0997">Cell inner membrane</keyword>
<keyword id="KW-1003">Cell membrane</keyword>
<keyword id="KW-0472">Membrane</keyword>
<gene>
    <name evidence="1" type="primary">syd</name>
    <name type="ordered locus">EcSMS35_2933</name>
</gene>
<protein>
    <recommendedName>
        <fullName evidence="1">Protein Syd</fullName>
    </recommendedName>
</protein>
<organism>
    <name type="scientific">Escherichia coli (strain SMS-3-5 / SECEC)</name>
    <dbReference type="NCBI Taxonomy" id="439855"/>
    <lineage>
        <taxon>Bacteria</taxon>
        <taxon>Pseudomonadati</taxon>
        <taxon>Pseudomonadota</taxon>
        <taxon>Gammaproteobacteria</taxon>
        <taxon>Enterobacterales</taxon>
        <taxon>Enterobacteriaceae</taxon>
        <taxon>Escherichia</taxon>
    </lineage>
</organism>
<proteinExistence type="inferred from homology"/>
<accession>B1LQY6</accession>
<sequence length="181" mass="20708">MDDLTAQALKDFTARYCDAWHEEHKSWPLSEELYGVPSPCIISTTEDAVYWQPQPFTGEQNVNAVERAFDIVIQPTIHTFYTTQFAGDMHAQFGDIKLTLLQTWSEDDFRRVQENLIGHLVTQKRLKLPPTLFIATLEEELEVISVCNLSGEVCKETLGTRKRTHLASNLAEFLNQLKPLL</sequence>
<evidence type="ECO:0000255" key="1">
    <source>
        <dbReference type="HAMAP-Rule" id="MF_01104"/>
    </source>
</evidence>
<name>SYDP_ECOSM</name>
<dbReference type="EMBL" id="CP000970">
    <property type="protein sequence ID" value="ACB19406.1"/>
    <property type="molecule type" value="Genomic_DNA"/>
</dbReference>
<dbReference type="RefSeq" id="WP_000342431.1">
    <property type="nucleotide sequence ID" value="NC_010498.1"/>
</dbReference>
<dbReference type="SMR" id="B1LQY6"/>
<dbReference type="GeneID" id="93779205"/>
<dbReference type="KEGG" id="ecm:EcSMS35_2933"/>
<dbReference type="HOGENOM" id="CLU_121866_0_0_6"/>
<dbReference type="Proteomes" id="UP000007011">
    <property type="component" value="Chromosome"/>
</dbReference>
<dbReference type="GO" id="GO:0009898">
    <property type="term" value="C:cytoplasmic side of plasma membrane"/>
    <property type="evidence" value="ECO:0007669"/>
    <property type="project" value="InterPro"/>
</dbReference>
<dbReference type="CDD" id="cd16323">
    <property type="entry name" value="Syd"/>
    <property type="match status" value="1"/>
</dbReference>
<dbReference type="FunFam" id="3.40.1580.20:FF:000001">
    <property type="entry name" value="Protein Syd"/>
    <property type="match status" value="1"/>
</dbReference>
<dbReference type="Gene3D" id="3.40.1580.20">
    <property type="entry name" value="Syd protein"/>
    <property type="match status" value="1"/>
</dbReference>
<dbReference type="HAMAP" id="MF_01104">
    <property type="entry name" value="Syd"/>
    <property type="match status" value="1"/>
</dbReference>
<dbReference type="InterPro" id="IPR009948">
    <property type="entry name" value="Syd"/>
</dbReference>
<dbReference type="InterPro" id="IPR038228">
    <property type="entry name" value="Syd_sf"/>
</dbReference>
<dbReference type="NCBIfam" id="NF003439">
    <property type="entry name" value="PRK04968.1"/>
    <property type="match status" value="1"/>
</dbReference>
<dbReference type="Pfam" id="PF07348">
    <property type="entry name" value="Syd"/>
    <property type="match status" value="1"/>
</dbReference>
<reference key="1">
    <citation type="journal article" date="2008" name="J. Bacteriol.">
        <title>Insights into the environmental resistance gene pool from the genome sequence of the multidrug-resistant environmental isolate Escherichia coli SMS-3-5.</title>
        <authorList>
            <person name="Fricke W.F."/>
            <person name="Wright M.S."/>
            <person name="Lindell A.H."/>
            <person name="Harkins D.M."/>
            <person name="Baker-Austin C."/>
            <person name="Ravel J."/>
            <person name="Stepanauskas R."/>
        </authorList>
    </citation>
    <scope>NUCLEOTIDE SEQUENCE [LARGE SCALE GENOMIC DNA]</scope>
    <source>
        <strain>SMS-3-5 / SECEC</strain>
    </source>
</reference>